<dbReference type="EC" id="4.1.1.39" evidence="1"/>
<dbReference type="EMBL" id="L22885">
    <property type="protein sequence ID" value="AAA25509.1"/>
    <property type="molecule type" value="Genomic_DNA"/>
</dbReference>
<dbReference type="SMR" id="Q59613"/>
<dbReference type="STRING" id="29421.B2M20_09250"/>
<dbReference type="GO" id="GO:0000287">
    <property type="term" value="F:magnesium ion binding"/>
    <property type="evidence" value="ECO:0007669"/>
    <property type="project" value="UniProtKB-UniRule"/>
</dbReference>
<dbReference type="GO" id="GO:0004497">
    <property type="term" value="F:monooxygenase activity"/>
    <property type="evidence" value="ECO:0007669"/>
    <property type="project" value="UniProtKB-KW"/>
</dbReference>
<dbReference type="GO" id="GO:0016984">
    <property type="term" value="F:ribulose-bisphosphate carboxylase activity"/>
    <property type="evidence" value="ECO:0007669"/>
    <property type="project" value="UniProtKB-UniRule"/>
</dbReference>
<dbReference type="GO" id="GO:0019253">
    <property type="term" value="P:reductive pentose-phosphate cycle"/>
    <property type="evidence" value="ECO:0007669"/>
    <property type="project" value="UniProtKB-UniRule"/>
</dbReference>
<dbReference type="Gene3D" id="3.20.20.110">
    <property type="entry name" value="Ribulose bisphosphate carboxylase, large subunit, C-terminal domain"/>
    <property type="match status" value="1"/>
</dbReference>
<dbReference type="Gene3D" id="3.30.70.150">
    <property type="entry name" value="RuBisCO large subunit, N-terminal domain"/>
    <property type="match status" value="1"/>
</dbReference>
<dbReference type="HAMAP" id="MF_01338">
    <property type="entry name" value="RuBisCO_L_type1"/>
    <property type="match status" value="1"/>
</dbReference>
<dbReference type="InterPro" id="IPR033966">
    <property type="entry name" value="RuBisCO"/>
</dbReference>
<dbReference type="InterPro" id="IPR020878">
    <property type="entry name" value="RuBisCo_large_chain_AS"/>
</dbReference>
<dbReference type="InterPro" id="IPR000685">
    <property type="entry name" value="RuBisCO_lsu_C"/>
</dbReference>
<dbReference type="InterPro" id="IPR036376">
    <property type="entry name" value="RuBisCO_lsu_C_sf"/>
</dbReference>
<dbReference type="InterPro" id="IPR017443">
    <property type="entry name" value="RuBisCO_lsu_fd_N"/>
</dbReference>
<dbReference type="InterPro" id="IPR036422">
    <property type="entry name" value="RuBisCO_lsu_N_sf"/>
</dbReference>
<dbReference type="InterPro" id="IPR020888">
    <property type="entry name" value="RuBisCO_lsuI"/>
</dbReference>
<dbReference type="NCBIfam" id="NF003252">
    <property type="entry name" value="PRK04208.1"/>
    <property type="match status" value="1"/>
</dbReference>
<dbReference type="PANTHER" id="PTHR42704">
    <property type="entry name" value="RIBULOSE BISPHOSPHATE CARBOXYLASE"/>
    <property type="match status" value="1"/>
</dbReference>
<dbReference type="PANTHER" id="PTHR42704:SF17">
    <property type="entry name" value="RIBULOSE BISPHOSPHATE CARBOXYLASE LARGE CHAIN"/>
    <property type="match status" value="1"/>
</dbReference>
<dbReference type="Pfam" id="PF00016">
    <property type="entry name" value="RuBisCO_large"/>
    <property type="match status" value="1"/>
</dbReference>
<dbReference type="Pfam" id="PF02788">
    <property type="entry name" value="RuBisCO_large_N"/>
    <property type="match status" value="1"/>
</dbReference>
<dbReference type="SFLD" id="SFLDG01052">
    <property type="entry name" value="RuBisCO"/>
    <property type="match status" value="1"/>
</dbReference>
<dbReference type="SFLD" id="SFLDS00014">
    <property type="entry name" value="RuBisCO"/>
    <property type="match status" value="1"/>
</dbReference>
<dbReference type="SFLD" id="SFLDG00301">
    <property type="entry name" value="RuBisCO-like_proteins"/>
    <property type="match status" value="1"/>
</dbReference>
<dbReference type="SUPFAM" id="SSF51649">
    <property type="entry name" value="RuBisCo, C-terminal domain"/>
    <property type="match status" value="1"/>
</dbReference>
<dbReference type="SUPFAM" id="SSF54966">
    <property type="entry name" value="RuBisCO, large subunit, small (N-terminal) domain"/>
    <property type="match status" value="1"/>
</dbReference>
<dbReference type="PROSITE" id="PS00157">
    <property type="entry name" value="RUBISCO_LARGE"/>
    <property type="match status" value="1"/>
</dbReference>
<feature type="chain" id="PRO_0000062633" description="Ribulose bisphosphate carboxylase large chain">
    <location>
        <begin position="1"/>
        <end position="472"/>
    </location>
</feature>
<feature type="active site" description="Proton acceptor" evidence="1">
    <location>
        <position position="168"/>
    </location>
</feature>
<feature type="active site" description="Proton acceptor" evidence="1">
    <location>
        <position position="287"/>
    </location>
</feature>
<feature type="binding site" description="in homodimeric partner" evidence="1">
    <location>
        <position position="116"/>
    </location>
    <ligand>
        <name>substrate</name>
    </ligand>
</feature>
<feature type="binding site" evidence="1">
    <location>
        <position position="166"/>
    </location>
    <ligand>
        <name>substrate</name>
    </ligand>
</feature>
<feature type="binding site" evidence="1">
    <location>
        <position position="170"/>
    </location>
    <ligand>
        <name>substrate</name>
    </ligand>
</feature>
<feature type="binding site" description="via carbamate group" evidence="1">
    <location>
        <position position="194"/>
    </location>
    <ligand>
        <name>Mg(2+)</name>
        <dbReference type="ChEBI" id="CHEBI:18420"/>
    </ligand>
</feature>
<feature type="binding site" evidence="1">
    <location>
        <position position="196"/>
    </location>
    <ligand>
        <name>Mg(2+)</name>
        <dbReference type="ChEBI" id="CHEBI:18420"/>
    </ligand>
</feature>
<feature type="binding site" evidence="1">
    <location>
        <position position="197"/>
    </location>
    <ligand>
        <name>Mg(2+)</name>
        <dbReference type="ChEBI" id="CHEBI:18420"/>
    </ligand>
</feature>
<feature type="binding site" evidence="1">
    <location>
        <position position="288"/>
    </location>
    <ligand>
        <name>substrate</name>
    </ligand>
</feature>
<feature type="binding site" evidence="1">
    <location>
        <position position="320"/>
    </location>
    <ligand>
        <name>substrate</name>
    </ligand>
</feature>
<feature type="binding site" evidence="1">
    <location>
        <position position="372"/>
    </location>
    <ligand>
        <name>substrate</name>
    </ligand>
</feature>
<feature type="site" description="Transition state stabilizer" evidence="1">
    <location>
        <position position="327"/>
    </location>
</feature>
<feature type="modified residue" description="N6-carboxylysine" evidence="1">
    <location>
        <position position="194"/>
    </location>
</feature>
<protein>
    <recommendedName>
        <fullName evidence="1">Ribulose bisphosphate carboxylase large chain</fullName>
        <shortName evidence="1">RuBisCO large subunit</shortName>
        <ecNumber evidence="1">4.1.1.39</ecNumber>
    </recommendedName>
</protein>
<gene>
    <name evidence="1" type="primary">cbbL</name>
</gene>
<comment type="function">
    <text evidence="1">RuBisCO catalyzes two reactions: the carboxylation of D-ribulose 1,5-bisphosphate, the primary event in carbon dioxide fixation, as well as the oxidative fragmentation of the pentose substrate. Both reactions occur simultaneously and in competition at the same active site.</text>
</comment>
<comment type="catalytic activity">
    <reaction evidence="1">
        <text>2 (2R)-3-phosphoglycerate + 2 H(+) = D-ribulose 1,5-bisphosphate + CO2 + H2O</text>
        <dbReference type="Rhea" id="RHEA:23124"/>
        <dbReference type="ChEBI" id="CHEBI:15377"/>
        <dbReference type="ChEBI" id="CHEBI:15378"/>
        <dbReference type="ChEBI" id="CHEBI:16526"/>
        <dbReference type="ChEBI" id="CHEBI:57870"/>
        <dbReference type="ChEBI" id="CHEBI:58272"/>
        <dbReference type="EC" id="4.1.1.39"/>
    </reaction>
</comment>
<comment type="catalytic activity">
    <reaction evidence="1">
        <text>D-ribulose 1,5-bisphosphate + O2 = 2-phosphoglycolate + (2R)-3-phosphoglycerate + 2 H(+)</text>
        <dbReference type="Rhea" id="RHEA:36631"/>
        <dbReference type="ChEBI" id="CHEBI:15378"/>
        <dbReference type="ChEBI" id="CHEBI:15379"/>
        <dbReference type="ChEBI" id="CHEBI:57870"/>
        <dbReference type="ChEBI" id="CHEBI:58033"/>
        <dbReference type="ChEBI" id="CHEBI:58272"/>
    </reaction>
</comment>
<comment type="cofactor">
    <cofactor evidence="1">
        <name>Mg(2+)</name>
        <dbReference type="ChEBI" id="CHEBI:18420"/>
    </cofactor>
    <text evidence="1">Binds 1 Mg(2+) ion per subunit.</text>
</comment>
<comment type="subunit">
    <text evidence="1">Heterohexadecamer of 8 large chains and 8 small chains.</text>
</comment>
<comment type="miscellaneous">
    <text evidence="1">The basic functional RuBisCO is composed of a large chain homodimer in a 'head-to-tail' conformation. In form I RuBisCO this homodimer is arranged in a barrel-like tetramer with the small subunits forming a tetrameric 'cap' on each end of the 'barrel'.</text>
</comment>
<comment type="similarity">
    <text evidence="1">Belongs to the RuBisCO large chain family. Type I subfamily.</text>
</comment>
<accession>Q59613</accession>
<proteinExistence type="inferred from homology"/>
<organism>
    <name type="scientific">Nitrobacter vulgaris</name>
    <dbReference type="NCBI Taxonomy" id="29421"/>
    <lineage>
        <taxon>Bacteria</taxon>
        <taxon>Pseudomonadati</taxon>
        <taxon>Pseudomonadota</taxon>
        <taxon>Alphaproteobacteria</taxon>
        <taxon>Hyphomicrobiales</taxon>
        <taxon>Nitrobacteraceae</taxon>
        <taxon>Nitrobacter</taxon>
    </lineage>
</organism>
<keyword id="KW-0113">Calvin cycle</keyword>
<keyword id="KW-0120">Carbon dioxide fixation</keyword>
<keyword id="KW-0456">Lyase</keyword>
<keyword id="KW-0460">Magnesium</keyword>
<keyword id="KW-0479">Metal-binding</keyword>
<keyword id="KW-0503">Monooxygenase</keyword>
<keyword id="KW-0560">Oxidoreductase</keyword>
<keyword id="KW-0602">Photosynthesis</keyword>
<reference key="1">
    <citation type="submission" date="1994-01" db="EMBL/GenBank/DDBJ databases">
        <title>Cloning, sequence analysis, expression in E. coli, and genome organization of some Calvin cycle genes from Nitrobacter vulgaris T3.</title>
        <authorList>
            <person name="Strecker M."/>
            <person name="Sickinger E."/>
            <person name="English R.S."/>
            <person name="Shively J.M."/>
            <person name="Bock E."/>
        </authorList>
    </citation>
    <scope>NUCLEOTIDE SEQUENCE [GENOMIC DNA]</scope>
    <source>
        <strain>T3</strain>
    </source>
</reference>
<name>RBL_NITVU</name>
<evidence type="ECO:0000255" key="1">
    <source>
        <dbReference type="HAMAP-Rule" id="MF_01338"/>
    </source>
</evidence>
<sequence length="472" mass="52643">MAVKSYQAGVTQYRQSYWQPDYMPLDTDILACFKITPQPGVDREEAAAAVAAESSCGTWTTVWTDLLTDLDYYKGRAYRLEDVPGDDTCYYAFIAYPIDLFEEGSVVNVFTSLVGNVFGFKAVRALRLEDLRFPIAYVKTCGGPPHGIQVERDKLNKYGRPLLGCTIKPKLGLSAKNYGRACYEALRGGLDFTKDDENINSQPFMRWRDRFDFVMEAVQKAEHETGERKGHYLNVTAPTPEEMYKRAEYAKEIRAPIIMHDYLAGGLCANAGLANWCRNNGMLLHIHRAMHAVIDRNPHHGIHFRVLTKILRLSGGDHLHTGTVVGKLEGDRASTLGWIDLLRESFVPEDRSRGIFFDQDWGSMPGGFAVASGGIHVWHMPALVTIFGDDSVLQFGGGTVGHPWGNALAHANRVALEACVQARGEGRHLEKEGKDLLTAAAAHSPELKIAMETWKEIKFEFETMDKLAVANK</sequence>